<name>CAS9A_STRTD</name>
<comment type="function">
    <text evidence="1 3">CRISPR (clustered regularly interspaced short palindromic repeat) is an adaptive immune system that provides protection against mobile genetic elements (viruses, transposable elements and conjugative plasmids). CRISPR clusters contain spacers, sequences complementary to antecedent mobile elements, and target invading nucleic acids. CRISPR clusters are transcribed and processed into CRISPR RNA (crRNA). In type II CRISPR systems correct processing of pre-crRNA requires a trans-encoded small RNA (tracrRNA), endogenous ribonuclease 3 (rnc) and this protein. The tracrRNA serves as a guide for ribonuclease 3-aided processing of pre-crRNA. Subsequently Cas9/crRNA/tracrRNA endonucleolytically cleaves linear or circular dsDNA target complementary to the spacer; Cas9 is inactive in the absence of the 2 guide RNAs (gRNA). Cas9 recognizes the protospacer adjacent motif (PAM) in the CRISPR repeat sequences to help distinguish self versus nonself, as targets within the bacterial CRISPR locus do not have PAMs. PAM recognition is also required for catalytic activity (By similarity). Cuts target DNA when Cas9 and gRNAs are mixed.</text>
</comment>
<comment type="cofactor">
    <cofactor evidence="1">
        <name>Mg(2+)</name>
        <dbReference type="ChEBI" id="CHEBI:18420"/>
    </cofactor>
</comment>
<comment type="subunit">
    <text evidence="4">Monomer. Binds crRNA and tracrRNA (Probable).</text>
</comment>
<comment type="domain">
    <text evidence="1">Has 2 endonuclease domains. The discontinuous RuvC-like domain cleaves the target DNA noncomplementary to crRNA while the HNH nuclease domain cleaves the target DNA complementary to crRNA.</text>
</comment>
<comment type="biotechnology">
    <text evidence="5 6">The simplicity of the Cas9-gRNAs RNA-directed DNA endonuclease activity may be used to target and modify a DNA sequence of interest.</text>
</comment>
<comment type="similarity">
    <text evidence="4">Belongs to the CRISPR-associated protein Cas9 family. Subtype II-A subfamily.</text>
</comment>
<sequence>MSDLVLGLDIGIGSVGVGILNKVTGEIIHKNSRIFPAAQAENNLVRRTNRQGRRLARRKKHRRVRLNRLFEESGLITDFTKISINLNPYQLRVKGLTDELSNEELFIALKNMVKHRGISYLDDASDDGNSSVGDYAQIVKENSKQLETKTPGQIQLERYQTYGQLRGDFTVEKDGKKHRLINVFPTSAYRSEALRILQTQQEFNPQITDEFINRYLEILTGKRKYYHGPGNEKSRTDYGRYRTSGETLDNIFGILIGKCTFYPDEFRAAKASYTAQEFNLLNDLNNLTVPTETKKLSKEQKNQIINYVKNEKAMGPAKLFKYIAKLLSCDVADIKGYRIDKSGKAEIHTFEAYRKMKTLETLDIEQMDRETLDKLAYVLTLNTEREGIQEALEHEFADGSFSQKQVDELVQFRKANSSIFGKGWHNFSVKLMMELIPELYETSEEQMTILTRLGKQKTTSSSNKTKYIDEKLLTEEIYNPVVAKSVRQAIKIVNAAIKEYGDFDNIVIEMARETNEDDEKKAIQKIQKANKDEKDAAMLKAANQYNGKAELPHSVFHGHKQLATKIRLWHQQGERCLYTGKTISIHDLINNSNQFEVDHILPLSITFDDSLANKVLVYATANQEKGQRTPYQALDSMDDAWSFRELKAFVRESKTLSNKKKEYLLTEEDISKFDVRKKFIERNLVDTRYASRVVLNALQEHFRAHKIDTKVSVVRGQFTSQLRRHWGIEKTRDTYHHHAVDALIIAASSQLNLWKKQKNTLVSYSEDQLLDIETGELISDDEYKESVFKAPYQHFVDTLKSKEFEDSILFSYQVDSKFNRKISDATIYATRQAKVGKDKADETYVLGKIKDIYTQDGYDAFMKIYKKDKSKFLMYRHDPQTFEKVIEPILENYPNKQINEKGKEVPCNPFLKYKEEHGYIRKYSKKGNGPEIKSLKYYDSKLGNHIDITPKDSNNKVVLQSVSPWRADVYFNKTTGKYEILGLKYADLQFEKGTGTYKISQEKYNDIKKKEGVDSDSEFKFTLYKNDLLLVKDTETKEQQLFRFLSRTMPKQKHYVELKPYDKQKFEGGEALIKVLGNVANSGQCKKGLGKSNISIYKVRTDVLGNQHIIKNEGDKPKLDF</sequence>
<protein>
    <recommendedName>
        <fullName evidence="1">CRISPR-associated endonuclease Cas9 1</fullName>
        <ecNumber evidence="1">3.1.-.-</ecNumber>
    </recommendedName>
    <alternativeName>
        <fullName>Cas9**</fullName>
    </alternativeName>
</protein>
<reference key="1">
    <citation type="journal article" date="2006" name="Proc. Natl. Acad. Sci. U.S.A.">
        <title>Comparative genomics of the lactic acid bacteria.</title>
        <authorList>
            <person name="Makarova K.S."/>
            <person name="Slesarev A."/>
            <person name="Wolf Y.I."/>
            <person name="Sorokin A."/>
            <person name="Mirkin B."/>
            <person name="Koonin E.V."/>
            <person name="Pavlov A."/>
            <person name="Pavlova N."/>
            <person name="Karamychev V."/>
            <person name="Polouchine N."/>
            <person name="Shakhova V."/>
            <person name="Grigoriev I."/>
            <person name="Lou Y."/>
            <person name="Rohksar D."/>
            <person name="Lucas S."/>
            <person name="Huang K."/>
            <person name="Goodstein D.M."/>
            <person name="Hawkins T."/>
            <person name="Plengvidhya V."/>
            <person name="Welker D."/>
            <person name="Hughes J."/>
            <person name="Goh Y."/>
            <person name="Benson A."/>
            <person name="Baldwin K."/>
            <person name="Lee J.-H."/>
            <person name="Diaz-Muniz I."/>
            <person name="Dosti B."/>
            <person name="Smeianov V."/>
            <person name="Wechter W."/>
            <person name="Barabote R."/>
            <person name="Lorca G."/>
            <person name="Altermann E."/>
            <person name="Barrangou R."/>
            <person name="Ganesan B."/>
            <person name="Xie Y."/>
            <person name="Rawsthorne H."/>
            <person name="Tamir D."/>
            <person name="Parker C."/>
            <person name="Breidt F."/>
            <person name="Broadbent J.R."/>
            <person name="Hutkins R."/>
            <person name="O'Sullivan D."/>
            <person name="Steele J."/>
            <person name="Unlu G."/>
            <person name="Saier M.H. Jr."/>
            <person name="Klaenhammer T."/>
            <person name="Richardson P."/>
            <person name="Kozyavkin S."/>
            <person name="Weimer B.C."/>
            <person name="Mills D.A."/>
        </authorList>
    </citation>
    <scope>NUCLEOTIDE SEQUENCE [LARGE SCALE GENOMIC DNA]</scope>
    <source>
        <strain>ATCC BAA-491 / LMD-9</strain>
    </source>
</reference>
<reference key="2">
    <citation type="journal article" date="2014" name="Nucleic Acids Res.">
        <title>Phylogeny of Cas9 determines functional exchangeability of dual-RNA and Cas9 among orthologous type II CRISPR-Cas systems.</title>
        <authorList>
            <person name="Fonfara I."/>
            <person name="Le Rhun A."/>
            <person name="Chylinski K."/>
            <person name="Makarova K.S."/>
            <person name="Lecrivain A.L."/>
            <person name="Bzdrenga J."/>
            <person name="Koonin E.V."/>
            <person name="Charpentier E."/>
        </authorList>
    </citation>
    <scope>FUNCTION AS AN ENDONUCLEASE</scope>
    <scope>POSSIBLE BIOTECHNOLOGY</scope>
    <source>
        <strain>ATCC BAA-491 / LMD-9</strain>
    </source>
</reference>
<reference key="3">
    <citation type="journal article" date="2023" name="Nat. Commun.">
        <title>Assessing and advancing the safety of CRISPR-Cas tools: from DNA to RNA editing.</title>
        <authorList>
            <person name="Tao J."/>
            <person name="Bauer D.E."/>
            <person name="Chiarle R."/>
        </authorList>
    </citation>
    <scope>REVIEW ON SAFETY OF GENOME EDITING TOOLS</scope>
</reference>
<accession>Q03LF7</accession>
<evidence type="ECO:0000255" key="1">
    <source>
        <dbReference type="HAMAP-Rule" id="MF_01480"/>
    </source>
</evidence>
<evidence type="ECO:0000255" key="2">
    <source>
        <dbReference type="PROSITE-ProRule" id="PRU01085"/>
    </source>
</evidence>
<evidence type="ECO:0000269" key="3">
    <source>
    </source>
</evidence>
<evidence type="ECO:0000305" key="4"/>
<evidence type="ECO:0000305" key="5">
    <source>
    </source>
</evidence>
<evidence type="ECO:0000305" key="6">
    <source>
    </source>
</evidence>
<evidence type="ECO:0007829" key="7">
    <source>
        <dbReference type="PDB" id="6M0V"/>
    </source>
</evidence>
<evidence type="ECO:0007829" key="8">
    <source>
        <dbReference type="PDB" id="6M0W"/>
    </source>
</evidence>
<evidence type="ECO:0007829" key="9">
    <source>
        <dbReference type="PDB" id="6M0X"/>
    </source>
</evidence>
<evidence type="ECO:0007829" key="10">
    <source>
        <dbReference type="PDB" id="6RJA"/>
    </source>
</evidence>
<evidence type="ECO:0007829" key="11">
    <source>
        <dbReference type="PDB" id="6RJD"/>
    </source>
</evidence>
<evidence type="ECO:0007829" key="12">
    <source>
        <dbReference type="PDB" id="6RJG"/>
    </source>
</evidence>
<organism>
    <name type="scientific">Streptococcus thermophilus (strain ATCC BAA-491 / LMD-9)</name>
    <dbReference type="NCBI Taxonomy" id="322159"/>
    <lineage>
        <taxon>Bacteria</taxon>
        <taxon>Bacillati</taxon>
        <taxon>Bacillota</taxon>
        <taxon>Bacilli</taxon>
        <taxon>Lactobacillales</taxon>
        <taxon>Streptococcaceae</taxon>
        <taxon>Streptococcus</taxon>
    </lineage>
</organism>
<proteinExistence type="evidence at protein level"/>
<dbReference type="EC" id="3.1.-.-" evidence="1"/>
<dbReference type="EMBL" id="CP000419">
    <property type="protein sequence ID" value="ABJ65965.1"/>
    <property type="molecule type" value="Genomic_DNA"/>
</dbReference>
<dbReference type="RefSeq" id="WP_011680957.1">
    <property type="nucleotide sequence ID" value="NC_008532.1"/>
</dbReference>
<dbReference type="PDB" id="6M0V">
    <property type="method" value="X-ray"/>
    <property type="resolution" value="3.00 A"/>
    <property type="chains" value="A=2-1121"/>
</dbReference>
<dbReference type="PDB" id="6M0W">
    <property type="method" value="X-ray"/>
    <property type="resolution" value="2.76 A"/>
    <property type="chains" value="A=2-1121"/>
</dbReference>
<dbReference type="PDB" id="6M0X">
    <property type="method" value="X-ray"/>
    <property type="resolution" value="2.56 A"/>
    <property type="chains" value="A=2-1121"/>
</dbReference>
<dbReference type="PDB" id="6RJ9">
    <property type="method" value="EM"/>
    <property type="resolution" value="3.20 A"/>
    <property type="chains" value="C=1-1121"/>
</dbReference>
<dbReference type="PDB" id="6RJA">
    <property type="method" value="EM"/>
    <property type="resolution" value="3.00 A"/>
    <property type="chains" value="C/F=1-1121"/>
</dbReference>
<dbReference type="PDB" id="6RJD">
    <property type="method" value="EM"/>
    <property type="resolution" value="3.30 A"/>
    <property type="chains" value="C=1-1121"/>
</dbReference>
<dbReference type="PDB" id="6RJG">
    <property type="method" value="EM"/>
    <property type="resolution" value="3.20 A"/>
    <property type="chains" value="C=1-1121"/>
</dbReference>
<dbReference type="PDBsum" id="6M0V"/>
<dbReference type="PDBsum" id="6M0W"/>
<dbReference type="PDBsum" id="6M0X"/>
<dbReference type="PDBsum" id="6RJ9"/>
<dbReference type="PDBsum" id="6RJA"/>
<dbReference type="PDBsum" id="6RJD"/>
<dbReference type="PDBsum" id="6RJG"/>
<dbReference type="EMDB" id="EMD-4900"/>
<dbReference type="EMDB" id="EMD-4901"/>
<dbReference type="SMR" id="Q03LF7"/>
<dbReference type="KEGG" id="ste:STER_0709"/>
<dbReference type="HOGENOM" id="CLU_007514_0_0_9"/>
<dbReference type="GO" id="GO:0003677">
    <property type="term" value="F:DNA binding"/>
    <property type="evidence" value="ECO:0007669"/>
    <property type="project" value="UniProtKB-KW"/>
</dbReference>
<dbReference type="GO" id="GO:0004519">
    <property type="term" value="F:endonuclease activity"/>
    <property type="evidence" value="ECO:0007669"/>
    <property type="project" value="UniProtKB-UniRule"/>
</dbReference>
<dbReference type="GO" id="GO:0046872">
    <property type="term" value="F:metal ion binding"/>
    <property type="evidence" value="ECO:0007669"/>
    <property type="project" value="UniProtKB-UniRule"/>
</dbReference>
<dbReference type="GO" id="GO:0003723">
    <property type="term" value="F:RNA binding"/>
    <property type="evidence" value="ECO:0007669"/>
    <property type="project" value="UniProtKB-KW"/>
</dbReference>
<dbReference type="GO" id="GO:0051607">
    <property type="term" value="P:defense response to virus"/>
    <property type="evidence" value="ECO:0007669"/>
    <property type="project" value="UniProtKB-UniRule"/>
</dbReference>
<dbReference type="GO" id="GO:0043571">
    <property type="term" value="P:maintenance of CRISPR repeat elements"/>
    <property type="evidence" value="ECO:0007669"/>
    <property type="project" value="UniProtKB-UniRule"/>
</dbReference>
<dbReference type="Gene3D" id="1.10.30.50">
    <property type="match status" value="1"/>
</dbReference>
<dbReference type="Gene3D" id="3.30.420.10">
    <property type="entry name" value="Ribonuclease H-like superfamily/Ribonuclease H"/>
    <property type="match status" value="2"/>
</dbReference>
<dbReference type="HAMAP" id="MF_01480">
    <property type="entry name" value="Cas9"/>
    <property type="match status" value="1"/>
</dbReference>
<dbReference type="InterPro" id="IPR028629">
    <property type="entry name" value="Cas9"/>
</dbReference>
<dbReference type="InterPro" id="IPR040619">
    <property type="entry name" value="Cas9_alpha-helical_lobe"/>
</dbReference>
<dbReference type="InterPro" id="IPR040555">
    <property type="entry name" value="Cas9_PI2"/>
</dbReference>
<dbReference type="InterPro" id="IPR040656">
    <property type="entry name" value="Cas9_WED_dom"/>
</dbReference>
<dbReference type="InterPro" id="IPR033114">
    <property type="entry name" value="HNH_CAS9"/>
</dbReference>
<dbReference type="InterPro" id="IPR003615">
    <property type="entry name" value="HNH_nuc"/>
</dbReference>
<dbReference type="InterPro" id="IPR036397">
    <property type="entry name" value="RNaseH_sf"/>
</dbReference>
<dbReference type="InterPro" id="IPR041383">
    <property type="entry name" value="RuvC_III"/>
</dbReference>
<dbReference type="NCBIfam" id="TIGR01865">
    <property type="entry name" value="cas_Csn1"/>
    <property type="match status" value="1"/>
</dbReference>
<dbReference type="Pfam" id="PF18470">
    <property type="entry name" value="Cas9_a"/>
    <property type="match status" value="1"/>
</dbReference>
<dbReference type="Pfam" id="PF18070">
    <property type="entry name" value="Cas9_PI2"/>
    <property type="match status" value="1"/>
</dbReference>
<dbReference type="Pfam" id="PF18061">
    <property type="entry name" value="CRISPR_Cas9_WED"/>
    <property type="match status" value="1"/>
</dbReference>
<dbReference type="Pfam" id="PF13395">
    <property type="entry name" value="HNH_4"/>
    <property type="match status" value="1"/>
</dbReference>
<dbReference type="Pfam" id="PF18541">
    <property type="entry name" value="RuvC_III"/>
    <property type="match status" value="1"/>
</dbReference>
<dbReference type="PROSITE" id="PS51749">
    <property type="entry name" value="HNH_CAS9"/>
    <property type="match status" value="1"/>
</dbReference>
<feature type="chain" id="PRO_0000429989" description="CRISPR-associated endonuclease Cas9 1">
    <location>
        <begin position="1"/>
        <end position="1121"/>
    </location>
</feature>
<feature type="domain" description="HNH Cas9-type" evidence="2">
    <location>
        <begin position="516"/>
        <end position="684"/>
    </location>
</feature>
<feature type="active site" description="For RuvC-like nuclease domain" evidence="1">
    <location>
        <position position="9"/>
    </location>
</feature>
<feature type="active site" description="Proton acceptor for HNH nuclease domain" evidence="1">
    <location>
        <position position="599"/>
    </location>
</feature>
<feature type="binding site" evidence="1">
    <location>
        <position position="9"/>
    </location>
    <ligand>
        <name>Mg(2+)</name>
        <dbReference type="ChEBI" id="CHEBI:18420"/>
        <label>1</label>
    </ligand>
</feature>
<feature type="binding site" evidence="1">
    <location>
        <position position="9"/>
    </location>
    <ligand>
        <name>Mg(2+)</name>
        <dbReference type="ChEBI" id="CHEBI:18420"/>
        <label>2</label>
    </ligand>
</feature>
<feature type="binding site" evidence="1">
    <location>
        <position position="509"/>
    </location>
    <ligand>
        <name>Mg(2+)</name>
        <dbReference type="ChEBI" id="CHEBI:18420"/>
        <label>1</label>
    </ligand>
</feature>
<feature type="binding site" evidence="1">
    <location>
        <position position="513"/>
    </location>
    <ligand>
        <name>Mg(2+)</name>
        <dbReference type="ChEBI" id="CHEBI:18420"/>
        <label>1</label>
    </ligand>
</feature>
<feature type="binding site" evidence="1">
    <location>
        <position position="513"/>
    </location>
    <ligand>
        <name>Mg(2+)</name>
        <dbReference type="ChEBI" id="CHEBI:18420"/>
        <label>2</label>
    </ligand>
</feature>
<feature type="binding site" evidence="1">
    <location>
        <position position="738"/>
    </location>
    <ligand>
        <name>Mg(2+)</name>
        <dbReference type="ChEBI" id="CHEBI:18420"/>
        <label>2</label>
    </ligand>
</feature>
<feature type="strand" evidence="9">
    <location>
        <begin position="5"/>
        <end position="10"/>
    </location>
</feature>
<feature type="strand" evidence="9">
    <location>
        <begin position="12"/>
        <end position="20"/>
    </location>
</feature>
<feature type="turn" evidence="9">
    <location>
        <begin position="22"/>
        <end position="24"/>
    </location>
</feature>
<feature type="strand" evidence="9">
    <location>
        <begin position="27"/>
        <end position="34"/>
    </location>
</feature>
<feature type="helix" evidence="9">
    <location>
        <begin position="38"/>
        <end position="41"/>
    </location>
</feature>
<feature type="helix" evidence="9">
    <location>
        <begin position="43"/>
        <end position="72"/>
    </location>
</feature>
<feature type="helix" evidence="7">
    <location>
        <begin position="79"/>
        <end position="81"/>
    </location>
</feature>
<feature type="strand" evidence="9">
    <location>
        <begin position="84"/>
        <end position="86"/>
    </location>
</feature>
<feature type="helix" evidence="9">
    <location>
        <begin position="88"/>
        <end position="94"/>
    </location>
</feature>
<feature type="turn" evidence="9">
    <location>
        <begin position="95"/>
        <end position="97"/>
    </location>
</feature>
<feature type="helix" evidence="9">
    <location>
        <begin position="102"/>
        <end position="113"/>
    </location>
</feature>
<feature type="helix" evidence="10">
    <location>
        <begin position="134"/>
        <end position="146"/>
    </location>
</feature>
<feature type="helix" evidence="9">
    <location>
        <begin position="151"/>
        <end position="162"/>
    </location>
</feature>
<feature type="strand" evidence="9">
    <location>
        <begin position="166"/>
        <end position="173"/>
    </location>
</feature>
<feature type="strand" evidence="9">
    <location>
        <begin position="176"/>
        <end position="181"/>
    </location>
</feature>
<feature type="helix" evidence="9">
    <location>
        <begin position="186"/>
        <end position="203"/>
    </location>
</feature>
<feature type="helix" evidence="9">
    <location>
        <begin position="209"/>
        <end position="220"/>
    </location>
</feature>
<feature type="turn" evidence="9">
    <location>
        <begin position="225"/>
        <end position="227"/>
    </location>
</feature>
<feature type="strand" evidence="9">
    <location>
        <begin position="232"/>
        <end position="234"/>
    </location>
</feature>
<feature type="strand" evidence="9">
    <location>
        <begin position="239"/>
        <end position="241"/>
    </location>
</feature>
<feature type="strand" evidence="11">
    <location>
        <begin position="243"/>
        <end position="245"/>
    </location>
</feature>
<feature type="helix" evidence="9">
    <location>
        <begin position="253"/>
        <end position="255"/>
    </location>
</feature>
<feature type="strand" evidence="8">
    <location>
        <begin position="260"/>
        <end position="262"/>
    </location>
</feature>
<feature type="helix" evidence="9">
    <location>
        <begin position="273"/>
        <end position="285"/>
    </location>
</feature>
<feature type="strand" evidence="7">
    <location>
        <begin position="290"/>
        <end position="295"/>
    </location>
</feature>
<feature type="helix" evidence="9">
    <location>
        <begin position="298"/>
        <end position="310"/>
    </location>
</feature>
<feature type="helix" evidence="9">
    <location>
        <begin position="316"/>
        <end position="325"/>
    </location>
</feature>
<feature type="helix" evidence="9">
    <location>
        <begin position="331"/>
        <end position="333"/>
    </location>
</feature>
<feature type="strand" evidence="9">
    <location>
        <begin position="341"/>
        <end position="343"/>
    </location>
</feature>
<feature type="helix" evidence="9">
    <location>
        <begin position="351"/>
        <end position="357"/>
    </location>
</feature>
<feature type="strand" evidence="9">
    <location>
        <begin position="360"/>
        <end position="362"/>
    </location>
</feature>
<feature type="helix" evidence="9">
    <location>
        <begin position="364"/>
        <end position="366"/>
    </location>
</feature>
<feature type="helix" evidence="9">
    <location>
        <begin position="369"/>
        <end position="381"/>
    </location>
</feature>
<feature type="helix" evidence="9">
    <location>
        <begin position="385"/>
        <end position="395"/>
    </location>
</feature>
<feature type="helix" evidence="9">
    <location>
        <begin position="403"/>
        <end position="415"/>
    </location>
</feature>
<feature type="helix" evidence="9">
    <location>
        <begin position="417"/>
        <end position="420"/>
    </location>
</feature>
<feature type="strand" evidence="10">
    <location>
        <begin position="424"/>
        <end position="427"/>
    </location>
</feature>
<feature type="helix" evidence="9">
    <location>
        <begin position="429"/>
        <end position="433"/>
    </location>
</feature>
<feature type="helix" evidence="9">
    <location>
        <begin position="436"/>
        <end position="441"/>
    </location>
</feature>
<feature type="helix" evidence="9">
    <location>
        <begin position="446"/>
        <end position="453"/>
    </location>
</feature>
<feature type="strand" evidence="12">
    <location>
        <begin position="465"/>
        <end position="467"/>
    </location>
</feature>
<feature type="helix" evidence="9">
    <location>
        <begin position="470"/>
        <end position="473"/>
    </location>
</feature>
<feature type="turn" evidence="9">
    <location>
        <begin position="474"/>
        <end position="476"/>
    </location>
</feature>
<feature type="helix" evidence="9">
    <location>
        <begin position="480"/>
        <end position="500"/>
    </location>
</feature>
<feature type="strand" evidence="9">
    <location>
        <begin position="504"/>
        <end position="510"/>
    </location>
</feature>
<feature type="helix" evidence="9">
    <location>
        <begin position="517"/>
        <end position="545"/>
    </location>
</feature>
<feature type="strand" evidence="9">
    <location>
        <begin position="547"/>
        <end position="550"/>
    </location>
</feature>
<feature type="helix" evidence="9">
    <location>
        <begin position="553"/>
        <end position="556"/>
    </location>
</feature>
<feature type="helix" evidence="9">
    <location>
        <begin position="562"/>
        <end position="571"/>
    </location>
</feature>
<feature type="turn" evidence="9">
    <location>
        <begin position="572"/>
        <end position="574"/>
    </location>
</feature>
<feature type="turn" evidence="9">
    <location>
        <begin position="577"/>
        <end position="579"/>
    </location>
</feature>
<feature type="helix" evidence="9">
    <location>
        <begin position="585"/>
        <end position="590"/>
    </location>
</feature>
<feature type="helix" evidence="9">
    <location>
        <begin position="592"/>
        <end position="594"/>
    </location>
</feature>
<feature type="strand" evidence="9">
    <location>
        <begin position="595"/>
        <end position="601"/>
    </location>
</feature>
<feature type="turn" evidence="9">
    <location>
        <begin position="603"/>
        <end position="605"/>
    </location>
</feature>
<feature type="helix" evidence="9">
    <location>
        <begin position="611"/>
        <end position="613"/>
    </location>
</feature>
<feature type="strand" evidence="9">
    <location>
        <begin position="614"/>
        <end position="618"/>
    </location>
</feature>
<feature type="helix" evidence="9">
    <location>
        <begin position="619"/>
        <end position="625"/>
    </location>
</feature>
<feature type="helix" evidence="9">
    <location>
        <begin position="630"/>
        <end position="633"/>
    </location>
</feature>
<feature type="turn" evidence="9">
    <location>
        <begin position="634"/>
        <end position="636"/>
    </location>
</feature>
<feature type="strand" evidence="9">
    <location>
        <begin position="638"/>
        <end position="640"/>
    </location>
</feature>
<feature type="helix" evidence="9">
    <location>
        <begin position="643"/>
        <end position="652"/>
    </location>
</feature>
<feature type="strand" evidence="9">
    <location>
        <begin position="654"/>
        <end position="656"/>
    </location>
</feature>
<feature type="helix" evidence="9">
    <location>
        <begin position="658"/>
        <end position="665"/>
    </location>
</feature>
<feature type="helix" evidence="9">
    <location>
        <begin position="681"/>
        <end position="704"/>
    </location>
</feature>
<feature type="strand" evidence="9">
    <location>
        <begin position="710"/>
        <end position="715"/>
    </location>
</feature>
<feature type="helix" evidence="9">
    <location>
        <begin position="716"/>
        <end position="725"/>
    </location>
</feature>
<feature type="strand" evidence="7">
    <location>
        <begin position="732"/>
        <end position="734"/>
    </location>
</feature>
<feature type="helix" evidence="9">
    <location>
        <begin position="736"/>
        <end position="749"/>
    </location>
</feature>
<feature type="helix" evidence="8">
    <location>
        <begin position="750"/>
        <end position="752"/>
    </location>
</feature>
<feature type="helix" evidence="9">
    <location>
        <begin position="792"/>
        <end position="800"/>
    </location>
</feature>
<feature type="helix" evidence="9">
    <location>
        <begin position="805"/>
        <end position="807"/>
    </location>
</feature>
<feature type="strand" evidence="9">
    <location>
        <begin position="809"/>
        <end position="812"/>
    </location>
</feature>
<feature type="strand" evidence="9">
    <location>
        <begin position="828"/>
        <end position="833"/>
    </location>
</feature>
<feature type="strand" evidence="9">
    <location>
        <begin position="842"/>
        <end position="850"/>
    </location>
</feature>
<feature type="strand" evidence="10">
    <location>
        <begin position="852"/>
        <end position="854"/>
    </location>
</feature>
<feature type="helix" evidence="9">
    <location>
        <begin position="855"/>
        <end position="868"/>
    </location>
</feature>
<feature type="helix" evidence="9">
    <location>
        <begin position="869"/>
        <end position="871"/>
    </location>
</feature>
<feature type="helix" evidence="9">
    <location>
        <begin position="873"/>
        <end position="877"/>
    </location>
</feature>
<feature type="helix" evidence="9">
    <location>
        <begin position="879"/>
        <end position="884"/>
    </location>
</feature>
<feature type="helix" evidence="9">
    <location>
        <begin position="886"/>
        <end position="892"/>
    </location>
</feature>
<feature type="strand" evidence="9">
    <location>
        <begin position="895"/>
        <end position="898"/>
    </location>
</feature>
<feature type="strand" evidence="9">
    <location>
        <begin position="904"/>
        <end position="906"/>
    </location>
</feature>
<feature type="helix" evidence="9">
    <location>
        <begin position="909"/>
        <end position="917"/>
    </location>
</feature>
<feature type="strand" evidence="9">
    <location>
        <begin position="925"/>
        <end position="927"/>
    </location>
</feature>
<feature type="strand" evidence="9">
    <location>
        <begin position="935"/>
        <end position="941"/>
    </location>
</feature>
<feature type="strand" evidence="12">
    <location>
        <begin position="944"/>
        <end position="947"/>
    </location>
</feature>
<feature type="strand" evidence="9">
    <location>
        <begin position="957"/>
        <end position="959"/>
    </location>
</feature>
<feature type="strand" evidence="9">
    <location>
        <begin position="964"/>
        <end position="972"/>
    </location>
</feature>
<feature type="turn" evidence="9">
    <location>
        <begin position="973"/>
        <end position="976"/>
    </location>
</feature>
<feature type="strand" evidence="9">
    <location>
        <begin position="977"/>
        <end position="984"/>
    </location>
</feature>
<feature type="helix" evidence="9">
    <location>
        <begin position="985"/>
        <end position="987"/>
    </location>
</feature>
<feature type="turn" evidence="9">
    <location>
        <begin position="992"/>
        <end position="994"/>
    </location>
</feature>
<feature type="helix" evidence="9">
    <location>
        <begin position="1001"/>
        <end position="1010"/>
    </location>
</feature>
<feature type="strand" evidence="9">
    <location>
        <begin position="1018"/>
        <end position="1025"/>
    </location>
</feature>
<feature type="strand" evidence="9">
    <location>
        <begin position="1028"/>
        <end position="1033"/>
    </location>
</feature>
<feature type="turn" evidence="9">
    <location>
        <begin position="1034"/>
        <end position="1036"/>
    </location>
</feature>
<feature type="strand" evidence="9">
    <location>
        <begin position="1039"/>
        <end position="1047"/>
    </location>
</feature>
<feature type="strand" evidence="7">
    <location>
        <begin position="1050"/>
        <end position="1052"/>
    </location>
</feature>
<feature type="strand" evidence="9">
    <location>
        <begin position="1055"/>
        <end position="1059"/>
    </location>
</feature>
<feature type="strand" evidence="9">
    <location>
        <begin position="1061"/>
        <end position="1065"/>
    </location>
</feature>
<feature type="turn" evidence="9">
    <location>
        <begin position="1074"/>
        <end position="1076"/>
    </location>
</feature>
<feature type="strand" evidence="10">
    <location>
        <begin position="1081"/>
        <end position="1083"/>
    </location>
</feature>
<feature type="strand" evidence="9">
    <location>
        <begin position="1085"/>
        <end position="1088"/>
    </location>
</feature>
<feature type="strand" evidence="9">
    <location>
        <begin position="1094"/>
        <end position="1101"/>
    </location>
</feature>
<feature type="strand" evidence="9">
    <location>
        <begin position="1107"/>
        <end position="1111"/>
    </location>
</feature>
<keyword id="KW-0002">3D-structure</keyword>
<keyword id="KW-0051">Antiviral defense</keyword>
<keyword id="KW-0238">DNA-binding</keyword>
<keyword id="KW-0255">Endonuclease</keyword>
<keyword id="KW-0378">Hydrolase</keyword>
<keyword id="KW-0460">Magnesium</keyword>
<keyword id="KW-0464">Manganese</keyword>
<keyword id="KW-0479">Metal-binding</keyword>
<keyword id="KW-0540">Nuclease</keyword>
<keyword id="KW-0694">RNA-binding</keyword>
<gene>
    <name evidence="1" type="primary">cas9-1</name>
    <name type="synonym">csn1</name>
    <name type="ordered locus">STER_0709</name>
</gene>